<gene>
    <name type="primary">NCAPG</name>
    <name type="synonym">CAPG</name>
    <name type="synonym">NYMEL3</name>
</gene>
<dbReference type="EMBL" id="AF235023">
    <property type="protein sequence ID" value="AAG30732.1"/>
    <property type="molecule type" value="mRNA"/>
</dbReference>
<dbReference type="EMBL" id="AF331796">
    <property type="protein sequence ID" value="AAG49627.1"/>
    <property type="molecule type" value="mRNA"/>
</dbReference>
<dbReference type="EMBL" id="AB013299">
    <property type="protein sequence ID" value="BAB21557.1"/>
    <property type="molecule type" value="mRNA"/>
</dbReference>
<dbReference type="EMBL" id="AK022512">
    <property type="protein sequence ID" value="BAB14069.1"/>
    <property type="molecule type" value="mRNA"/>
</dbReference>
<dbReference type="EMBL" id="AK023147">
    <property type="protein sequence ID" value="BAB14429.1"/>
    <property type="status" value="ALT_INIT"/>
    <property type="molecule type" value="mRNA"/>
</dbReference>
<dbReference type="EMBL" id="AK027511">
    <property type="protein sequence ID" value="BAB55165.1"/>
    <property type="status" value="ALT_INIT"/>
    <property type="molecule type" value="mRNA"/>
</dbReference>
<dbReference type="EMBL" id="BC000827">
    <property type="protein sequence ID" value="AAH00827.1"/>
    <property type="status" value="ALT_INIT"/>
    <property type="molecule type" value="mRNA"/>
</dbReference>
<dbReference type="EMBL" id="BC101476">
    <property type="protein sequence ID" value="AAI01477.1"/>
    <property type="molecule type" value="mRNA"/>
</dbReference>
<dbReference type="CCDS" id="CCDS3424.1"/>
<dbReference type="RefSeq" id="NP_071741.2">
    <property type="nucleotide sequence ID" value="NM_022346.4"/>
</dbReference>
<dbReference type="PDB" id="6IGX">
    <property type="method" value="X-ray"/>
    <property type="resolution" value="3.00 A"/>
    <property type="chains" value="B/D=1-900"/>
</dbReference>
<dbReference type="PDBsum" id="6IGX"/>
<dbReference type="EMDB" id="EMD-10827"/>
<dbReference type="SMR" id="Q9BPX3"/>
<dbReference type="BioGRID" id="122089">
    <property type="interactions" value="211"/>
</dbReference>
<dbReference type="ComplexPortal" id="CPX-979">
    <property type="entry name" value="Condensin I complex"/>
</dbReference>
<dbReference type="CORUM" id="Q9BPX3"/>
<dbReference type="DIP" id="DIP-34891N"/>
<dbReference type="FunCoup" id="Q9BPX3">
    <property type="interactions" value="2613"/>
</dbReference>
<dbReference type="IntAct" id="Q9BPX3">
    <property type="interactions" value="82"/>
</dbReference>
<dbReference type="MINT" id="Q9BPX3"/>
<dbReference type="STRING" id="9606.ENSP00000251496"/>
<dbReference type="GlyGen" id="Q9BPX3">
    <property type="glycosylation" value="1 site, 1 O-linked glycan (1 site)"/>
</dbReference>
<dbReference type="iPTMnet" id="Q9BPX3"/>
<dbReference type="MetOSite" id="Q9BPX3"/>
<dbReference type="PhosphoSitePlus" id="Q9BPX3"/>
<dbReference type="SwissPalm" id="Q9BPX3"/>
<dbReference type="BioMuta" id="NCAPG"/>
<dbReference type="DMDM" id="30172941"/>
<dbReference type="jPOST" id="Q9BPX3"/>
<dbReference type="MassIVE" id="Q9BPX3"/>
<dbReference type="PaxDb" id="9606-ENSP00000251496"/>
<dbReference type="PeptideAtlas" id="Q9BPX3"/>
<dbReference type="ProteomicsDB" id="78586"/>
<dbReference type="Pumba" id="Q9BPX3"/>
<dbReference type="Antibodypedia" id="23100">
    <property type="antibodies" value="192 antibodies from 30 providers"/>
</dbReference>
<dbReference type="DNASU" id="64151"/>
<dbReference type="Ensembl" id="ENST00000251496.7">
    <property type="protein sequence ID" value="ENSP00000251496.2"/>
    <property type="gene ID" value="ENSG00000109805.10"/>
</dbReference>
<dbReference type="GeneID" id="64151"/>
<dbReference type="KEGG" id="hsa:64151"/>
<dbReference type="MANE-Select" id="ENST00000251496.7">
    <property type="protein sequence ID" value="ENSP00000251496.2"/>
    <property type="RefSeq nucleotide sequence ID" value="NM_022346.5"/>
    <property type="RefSeq protein sequence ID" value="NP_071741.2"/>
</dbReference>
<dbReference type="UCSC" id="uc003gpp.5">
    <property type="organism name" value="human"/>
</dbReference>
<dbReference type="AGR" id="HGNC:24304"/>
<dbReference type="CTD" id="64151"/>
<dbReference type="DisGeNET" id="64151"/>
<dbReference type="GeneCards" id="NCAPG"/>
<dbReference type="HGNC" id="HGNC:24304">
    <property type="gene designation" value="NCAPG"/>
</dbReference>
<dbReference type="HPA" id="ENSG00000109805">
    <property type="expression patterns" value="Tissue enhanced (bone marrow, lymphoid tissue)"/>
</dbReference>
<dbReference type="MIM" id="606280">
    <property type="type" value="gene"/>
</dbReference>
<dbReference type="neXtProt" id="NX_Q9BPX3"/>
<dbReference type="OpenTargets" id="ENSG00000109805"/>
<dbReference type="PharmGKB" id="PA162397165"/>
<dbReference type="VEuPathDB" id="HostDB:ENSG00000109805"/>
<dbReference type="eggNOG" id="KOG2025">
    <property type="taxonomic scope" value="Eukaryota"/>
</dbReference>
<dbReference type="GeneTree" id="ENSGT00390000001577"/>
<dbReference type="HOGENOM" id="CLU_004446_2_0_1"/>
<dbReference type="InParanoid" id="Q9BPX3"/>
<dbReference type="OMA" id="FRATQIT"/>
<dbReference type="OrthoDB" id="27187at2759"/>
<dbReference type="PAN-GO" id="Q9BPX3">
    <property type="GO annotations" value="3 GO annotations based on evolutionary models"/>
</dbReference>
<dbReference type="PhylomeDB" id="Q9BPX3"/>
<dbReference type="TreeFam" id="TF101160"/>
<dbReference type="PathwayCommons" id="Q9BPX3"/>
<dbReference type="Reactome" id="R-HSA-2514853">
    <property type="pathway name" value="Condensation of Prometaphase Chromosomes"/>
</dbReference>
<dbReference type="SignaLink" id="Q9BPX3"/>
<dbReference type="SIGNOR" id="Q9BPX3"/>
<dbReference type="BioGRID-ORCS" id="64151">
    <property type="hits" value="798 hits in 1172 CRISPR screens"/>
</dbReference>
<dbReference type="ChiTaRS" id="NCAPG">
    <property type="organism name" value="human"/>
</dbReference>
<dbReference type="GeneWiki" id="NCAPG"/>
<dbReference type="GenomeRNAi" id="64151"/>
<dbReference type="Pharos" id="Q9BPX3">
    <property type="development level" value="Tbio"/>
</dbReference>
<dbReference type="PRO" id="PR:Q9BPX3"/>
<dbReference type="Proteomes" id="UP000005640">
    <property type="component" value="Chromosome 4"/>
</dbReference>
<dbReference type="RNAct" id="Q9BPX3">
    <property type="molecule type" value="protein"/>
</dbReference>
<dbReference type="Bgee" id="ENSG00000109805">
    <property type="expression patterns" value="Expressed in ventricular zone and 162 other cell types or tissues"/>
</dbReference>
<dbReference type="ExpressionAtlas" id="Q9BPX3">
    <property type="expression patterns" value="baseline and differential"/>
</dbReference>
<dbReference type="GO" id="GO:0000793">
    <property type="term" value="C:condensed chromosome"/>
    <property type="evidence" value="ECO:0000318"/>
    <property type="project" value="GO_Central"/>
</dbReference>
<dbReference type="GO" id="GO:0000779">
    <property type="term" value="C:condensed chromosome, centromeric region"/>
    <property type="evidence" value="ECO:0007669"/>
    <property type="project" value="Ensembl"/>
</dbReference>
<dbReference type="GO" id="GO:0000794">
    <property type="term" value="C:condensed nuclear chromosome"/>
    <property type="evidence" value="ECO:0000266"/>
    <property type="project" value="ComplexPortal"/>
</dbReference>
<dbReference type="GO" id="GO:0000796">
    <property type="term" value="C:condensin complex"/>
    <property type="evidence" value="ECO:0000314"/>
    <property type="project" value="UniProtKB"/>
</dbReference>
<dbReference type="GO" id="GO:0005737">
    <property type="term" value="C:cytoplasm"/>
    <property type="evidence" value="ECO:0000318"/>
    <property type="project" value="GO_Central"/>
</dbReference>
<dbReference type="GO" id="GO:0005829">
    <property type="term" value="C:cytosol"/>
    <property type="evidence" value="ECO:0000304"/>
    <property type="project" value="Reactome"/>
</dbReference>
<dbReference type="GO" id="GO:0016020">
    <property type="term" value="C:membrane"/>
    <property type="evidence" value="ECO:0007005"/>
    <property type="project" value="UniProtKB"/>
</dbReference>
<dbReference type="GO" id="GO:0005634">
    <property type="term" value="C:nucleus"/>
    <property type="evidence" value="ECO:0000303"/>
    <property type="project" value="UniProtKB"/>
</dbReference>
<dbReference type="GO" id="GO:0051301">
    <property type="term" value="P:cell division"/>
    <property type="evidence" value="ECO:0007669"/>
    <property type="project" value="UniProtKB-KW"/>
</dbReference>
<dbReference type="GO" id="GO:0007076">
    <property type="term" value="P:mitotic chromosome condensation"/>
    <property type="evidence" value="ECO:0000314"/>
    <property type="project" value="UniProtKB"/>
</dbReference>
<dbReference type="GO" id="GO:1905821">
    <property type="term" value="P:positive regulation of chromosome condensation"/>
    <property type="evidence" value="ECO:0000314"/>
    <property type="project" value="ComplexPortal"/>
</dbReference>
<dbReference type="GO" id="GO:0051984">
    <property type="term" value="P:positive regulation of chromosome segregation"/>
    <property type="evidence" value="ECO:0000266"/>
    <property type="project" value="ComplexPortal"/>
</dbReference>
<dbReference type="GO" id="GO:1905820">
    <property type="term" value="P:positive regulation of chromosome separation"/>
    <property type="evidence" value="ECO:0000266"/>
    <property type="project" value="ComplexPortal"/>
</dbReference>
<dbReference type="FunFam" id="1.25.10.10:FF:000274">
    <property type="entry name" value="Non-SMC condensin I complex subunit G"/>
    <property type="match status" value="1"/>
</dbReference>
<dbReference type="Gene3D" id="1.25.10.10">
    <property type="entry name" value="Leucine-rich Repeat Variant"/>
    <property type="match status" value="1"/>
</dbReference>
<dbReference type="InterPro" id="IPR011989">
    <property type="entry name" value="ARM-like"/>
</dbReference>
<dbReference type="InterPro" id="IPR016024">
    <property type="entry name" value="ARM-type_fold"/>
</dbReference>
<dbReference type="InterPro" id="IPR027165">
    <property type="entry name" value="CND3"/>
</dbReference>
<dbReference type="InterPro" id="IPR025977">
    <property type="entry name" value="Cnd3_C"/>
</dbReference>
<dbReference type="PANTHER" id="PTHR14418:SF5">
    <property type="entry name" value="CONDENSIN COMPLEX SUBUNIT 3"/>
    <property type="match status" value="1"/>
</dbReference>
<dbReference type="PANTHER" id="PTHR14418">
    <property type="entry name" value="CONDENSIN COMPLEX SUBUNIT 3-RELATED"/>
    <property type="match status" value="1"/>
</dbReference>
<dbReference type="Pfam" id="PF12719">
    <property type="entry name" value="Cnd3"/>
    <property type="match status" value="1"/>
</dbReference>
<dbReference type="SUPFAM" id="SSF48371">
    <property type="entry name" value="ARM repeat"/>
    <property type="match status" value="1"/>
</dbReference>
<sequence>MGAERRLLSIKEAFRLAQQPHQNQAKLVVALSRTYRTMDDKTVFHEEFIHYLKYVMVVYKREPAVERVIEFAAKFVTSFHQSDMEDDEEEEDGGLLNYLFTFLLKSHEANSNAVRFRVCLLINKLLGSMPENAQIDDDVFDKINKAMLIRLKDKIPNVRIQAVLALSRLQDPKDDECPVVNAYATLIENDSNPEVRRAVLSCIAPSAKTLPKIVGRTKDVKEAVRKLAYQVLAEKVHMRAMSIAQRVMLLQQGLNDRSDAVKQAMQKHLLQGWLRFSEGNILELLHRLDVENSSEVAVSVLNALFSITPLSELVGLCKNNDGRKLIPVETLTPEIALYWCALCEYLKSKGDEGEEFLEQILPEPVVYADYLLSYIQSIPVVNEEHRGDFSYIGNLMTKEFIGQQLILIIKSLDTSEEGGRKKLLAVLQEILILPTIPISLVSFLVERLLHIIIDDNKRTQIVTEIISEIRAPIVTVGVNNDPADVRKKELKMAEIKVKLIEAKEALENCITLQDFNRASELKEEIKALEDARINLLKETEQLEIKEVHIEKNDAETLQKCLILCYELLKQMSISTGLSATMNGIIESLILPGIISIHPVVRNLAVLCLGCCGLQNQDFARKHFVLLLQVLQIDDVTIKISALKAIFDQLMTFGIEPFKTKKIKTLHCEGTEINSDDEQESKEVEETATAKNVLKLLSDFLDSEVSELRTGAAEGLAKLMFSGLLVSSRILSRLILLWYNPVTEEDVQLRHCLGVFFPVFAYASRTNQECFEEAFLPTLQTLANAPASSPLAEIDITNVAELLVDLTRPSGLNPQAKTSQDYQALTVHDNLAMKICNEILTSPCSPEIRVYTKALSSLELSSHLAKDLLVLLNEILEQVKDRTCLRALEKIKIQLEKGNKEFGDQAEAAQDATLTTTTFQNEDEKNKEVYMTPLRGVKATQASKSTQLKTNRGQRKVTVSARTNRRCQTAEADSESDHEVPEPESEMKMRLPRRAKTAALEKSKLNLAQFLNEDLS</sequence>
<name>CND3_HUMAN</name>
<proteinExistence type="evidence at protein level"/>
<feature type="chain" id="PRO_0000095041" description="Condensin complex subunit 3">
    <location>
        <begin position="1"/>
        <end position="1015"/>
    </location>
</feature>
<feature type="repeat" description="HEAT 1">
    <location>
        <begin position="94"/>
        <end position="131"/>
    </location>
</feature>
<feature type="repeat" description="HEAT 2">
    <location>
        <begin position="138"/>
        <end position="173"/>
    </location>
</feature>
<feature type="repeat" description="HEAT 3">
    <location>
        <begin position="174"/>
        <end position="212"/>
    </location>
</feature>
<feature type="repeat" description="HEAT 4">
    <location>
        <begin position="238"/>
        <end position="275"/>
    </location>
</feature>
<feature type="repeat" description="HEAT 5">
    <location>
        <begin position="276"/>
        <end position="313"/>
    </location>
</feature>
<feature type="repeat" description="HEAT 6">
    <location>
        <begin position="399"/>
        <end position="436"/>
    </location>
</feature>
<feature type="repeat" description="HEAT 7">
    <location>
        <begin position="439"/>
        <end position="478"/>
    </location>
</feature>
<feature type="repeat" description="HEAT 8">
    <location>
        <begin position="617"/>
        <end position="654"/>
    </location>
</feature>
<feature type="repeat" description="HEAT 9">
    <location>
        <begin position="687"/>
        <end position="724"/>
    </location>
</feature>
<feature type="repeat" description="HEAT 10">
    <location>
        <begin position="865"/>
        <end position="907"/>
    </location>
</feature>
<feature type="region of interest" description="Disordered" evidence="2">
    <location>
        <begin position="941"/>
        <end position="994"/>
    </location>
</feature>
<feature type="compositionally biased region" description="Polar residues" evidence="2">
    <location>
        <begin position="941"/>
        <end position="950"/>
    </location>
</feature>
<feature type="compositionally biased region" description="Basic and acidic residues" evidence="2">
    <location>
        <begin position="974"/>
        <end position="988"/>
    </location>
</feature>
<feature type="modified residue" description="Phosphoserine" evidence="10 11 13">
    <location>
        <position position="390"/>
    </location>
</feature>
<feature type="modified residue" description="Phosphoserine" evidence="7 8 9 10 11 12 13">
    <location>
        <position position="674"/>
    </location>
</feature>
<feature type="modified residue" description="Phosphothreonine" evidence="11 13">
    <location>
        <position position="931"/>
    </location>
</feature>
<feature type="modified residue" description="Phosphoserine" evidence="8">
    <location>
        <position position="973"/>
    </location>
</feature>
<feature type="modified residue" description="Phosphoserine" evidence="8">
    <location>
        <position position="975"/>
    </location>
</feature>
<feature type="modified residue" description="Phosphoserine" evidence="8">
    <location>
        <position position="1002"/>
    </location>
</feature>
<feature type="modified residue" description="Phosphoserine" evidence="7 9 10 11 12">
    <location>
        <position position="1015"/>
    </location>
</feature>
<feature type="sequence variant" id="VAR_053041" description="In dbSNP:rs35722563.">
    <original>A</original>
    <variation>P</variation>
    <location>
        <position position="64"/>
    </location>
</feature>
<feature type="sequence variant" id="VAR_036125" description="In a colorectal cancer sample; somatic mutation." evidence="5">
    <original>M</original>
    <variation>T</variation>
    <location>
        <position position="265"/>
    </location>
</feature>
<feature type="sequence variant" id="VAR_053042" description="In dbSNP:rs3795243." evidence="3">
    <original>M</original>
    <variation>I</variation>
    <location>
        <position position="581"/>
    </location>
</feature>
<feature type="sequence conflict" description="In Ref. 4; BAB14069." evidence="6" ref="4">
    <original>R</original>
    <variation>G</variation>
    <location>
        <position position="115"/>
    </location>
</feature>
<feature type="sequence conflict" description="In Ref. 1; AAG30732." evidence="6" ref="1">
    <original>F</original>
    <variation>V</variation>
    <location>
        <position position="276"/>
    </location>
</feature>
<feature type="sequence conflict" description="In Ref. 4; BAB55165." evidence="6" ref="4">
    <original>S</original>
    <variation>P</variation>
    <location>
        <position position="519"/>
    </location>
</feature>
<feature type="sequence conflict" description="In Ref. 4; BAB14069." evidence="6" ref="4">
    <original>D</original>
    <variation>V</variation>
    <location>
        <position position="676"/>
    </location>
</feature>
<feature type="sequence conflict" description="In Ref. 4; BAB14069." evidence="6" ref="4">
    <original>K</original>
    <variation>R</variation>
    <location>
        <position position="681"/>
    </location>
</feature>
<feature type="sequence conflict" description="In Ref. 4; BAB14069." evidence="6" ref="4">
    <original>V</original>
    <variation>A</variation>
    <location>
        <position position="704"/>
    </location>
</feature>
<feature type="sequence conflict" description="In Ref. 4; BAB55165." evidence="6" ref="4">
    <original>N</original>
    <variation>D</variation>
    <location>
        <position position="836"/>
    </location>
</feature>
<feature type="sequence conflict" description="In Ref. 1; AAG30732." evidence="6" ref="1">
    <original>L</original>
    <variation>F</variation>
    <location>
        <position position="1010"/>
    </location>
</feature>
<feature type="helix" evidence="14">
    <location>
        <begin position="10"/>
        <end position="17"/>
    </location>
</feature>
<feature type="strand" evidence="14">
    <location>
        <begin position="19"/>
        <end position="21"/>
    </location>
</feature>
<feature type="helix" evidence="14">
    <location>
        <begin position="24"/>
        <end position="37"/>
    </location>
</feature>
<feature type="strand" evidence="14">
    <location>
        <begin position="38"/>
        <end position="40"/>
    </location>
</feature>
<feature type="helix" evidence="14">
    <location>
        <begin position="42"/>
        <end position="52"/>
    </location>
</feature>
<feature type="helix" evidence="14">
    <location>
        <begin position="53"/>
        <end position="55"/>
    </location>
</feature>
<feature type="helix" evidence="14">
    <location>
        <begin position="63"/>
        <end position="77"/>
    </location>
</feature>
<feature type="helix" evidence="14">
    <location>
        <begin position="96"/>
        <end position="105"/>
    </location>
</feature>
<feature type="helix" evidence="14">
    <location>
        <begin position="112"/>
        <end position="128"/>
    </location>
</feature>
<feature type="helix" evidence="14">
    <location>
        <begin position="139"/>
        <end position="150"/>
    </location>
</feature>
<feature type="strand" evidence="14">
    <location>
        <begin position="153"/>
        <end position="155"/>
    </location>
</feature>
<feature type="helix" evidence="14">
    <location>
        <begin position="156"/>
        <end position="165"/>
    </location>
</feature>
<feature type="turn" evidence="14">
    <location>
        <begin position="166"/>
        <end position="169"/>
    </location>
</feature>
<feature type="strand" evidence="14">
    <location>
        <begin position="172"/>
        <end position="176"/>
    </location>
</feature>
<feature type="helix" evidence="14">
    <location>
        <begin position="178"/>
        <end position="189"/>
    </location>
</feature>
<feature type="helix" evidence="14">
    <location>
        <begin position="193"/>
        <end position="202"/>
    </location>
</feature>
<feature type="helix" evidence="14">
    <location>
        <begin position="209"/>
        <end position="214"/>
    </location>
</feature>
<feature type="helix" evidence="14">
    <location>
        <begin position="215"/>
        <end position="218"/>
    </location>
</feature>
<feature type="strand" evidence="14">
    <location>
        <begin position="219"/>
        <end position="221"/>
    </location>
</feature>
<feature type="helix" evidence="14">
    <location>
        <begin position="222"/>
        <end position="235"/>
    </location>
</feature>
<feature type="helix" evidence="14">
    <location>
        <begin position="238"/>
        <end position="240"/>
    </location>
</feature>
<feature type="helix" evidence="14">
    <location>
        <begin position="243"/>
        <end position="254"/>
    </location>
</feature>
<feature type="helix" evidence="14">
    <location>
        <begin position="259"/>
        <end position="268"/>
    </location>
</feature>
<feature type="helix" evidence="14">
    <location>
        <begin position="270"/>
        <end position="276"/>
    </location>
</feature>
<feature type="helix" evidence="14">
    <location>
        <begin position="281"/>
        <end position="287"/>
    </location>
</feature>
<feature type="turn" evidence="14">
    <location>
        <begin position="288"/>
        <end position="292"/>
    </location>
</feature>
<feature type="helix" evidence="14">
    <location>
        <begin position="294"/>
        <end position="305"/>
    </location>
</feature>
<feature type="helix" evidence="14">
    <location>
        <begin position="310"/>
        <end position="313"/>
    </location>
</feature>
<feature type="helix" evidence="14">
    <location>
        <begin position="314"/>
        <end position="316"/>
    </location>
</feature>
<feature type="helix" evidence="14">
    <location>
        <begin position="333"/>
        <end position="348"/>
    </location>
</feature>
<feature type="helix" evidence="14">
    <location>
        <begin position="352"/>
        <end position="360"/>
    </location>
</feature>
<feature type="helix" evidence="14">
    <location>
        <begin position="364"/>
        <end position="375"/>
    </location>
</feature>
<feature type="helix" evidence="14">
    <location>
        <begin position="396"/>
        <end position="407"/>
    </location>
</feature>
<feature type="helix" evidence="14">
    <location>
        <begin position="408"/>
        <end position="411"/>
    </location>
</feature>
<feature type="helix" evidence="14">
    <location>
        <begin position="417"/>
        <end position="432"/>
    </location>
</feature>
<feature type="strand" evidence="14">
    <location>
        <begin position="434"/>
        <end position="436"/>
    </location>
</feature>
<feature type="helix" evidence="14">
    <location>
        <begin position="438"/>
        <end position="452"/>
    </location>
</feature>
<feature type="helix" evidence="14">
    <location>
        <begin position="455"/>
        <end position="469"/>
    </location>
</feature>
<feature type="helix" evidence="14">
    <location>
        <begin position="554"/>
        <end position="569"/>
    </location>
</feature>
<feature type="helix" evidence="14">
    <location>
        <begin position="573"/>
        <end position="575"/>
    </location>
</feature>
<feature type="helix" evidence="14">
    <location>
        <begin position="581"/>
        <end position="587"/>
    </location>
</feature>
<feature type="helix" evidence="14">
    <location>
        <begin position="589"/>
        <end position="593"/>
    </location>
</feature>
<feature type="helix" evidence="14">
    <location>
        <begin position="598"/>
        <end position="612"/>
    </location>
</feature>
<feature type="helix" evidence="14">
    <location>
        <begin position="616"/>
        <end position="632"/>
    </location>
</feature>
<feature type="helix" evidence="14">
    <location>
        <begin position="635"/>
        <end position="652"/>
    </location>
</feature>
<feature type="helix" evidence="14">
    <location>
        <begin position="655"/>
        <end position="657"/>
    </location>
</feature>
<feature type="helix" evidence="14">
    <location>
        <begin position="692"/>
        <end position="697"/>
    </location>
</feature>
<feature type="turn" evidence="14">
    <location>
        <begin position="698"/>
        <end position="701"/>
    </location>
</feature>
<feature type="helix" evidence="14">
    <location>
        <begin position="705"/>
        <end position="720"/>
    </location>
</feature>
<feature type="helix" evidence="14">
    <location>
        <begin position="727"/>
        <end position="738"/>
    </location>
</feature>
<feature type="helix" evidence="14">
    <location>
        <begin position="740"/>
        <end position="742"/>
    </location>
</feature>
<feature type="helix" evidence="14">
    <location>
        <begin position="746"/>
        <end position="760"/>
    </location>
</feature>
<feature type="helix" evidence="14">
    <location>
        <begin position="764"/>
        <end position="782"/>
    </location>
</feature>
<feature type="helix" evidence="14">
    <location>
        <begin position="789"/>
        <end position="792"/>
    </location>
</feature>
<feature type="helix" evidence="14">
    <location>
        <begin position="795"/>
        <end position="805"/>
    </location>
</feature>
<feature type="helix" evidence="14">
    <location>
        <begin position="826"/>
        <end position="840"/>
    </location>
</feature>
<feature type="helix" evidence="14">
    <location>
        <begin position="847"/>
        <end position="855"/>
    </location>
</feature>
<feature type="helix" evidence="14">
    <location>
        <begin position="864"/>
        <end position="877"/>
    </location>
</feature>
<feature type="helix" evidence="14">
    <location>
        <begin position="881"/>
        <end position="895"/>
    </location>
</feature>
<evidence type="ECO:0000250" key="1"/>
<evidence type="ECO:0000256" key="2">
    <source>
        <dbReference type="SAM" id="MobiDB-lite"/>
    </source>
</evidence>
<evidence type="ECO:0000269" key="3">
    <source>
    </source>
</evidence>
<evidence type="ECO:0000269" key="4">
    <source>
    </source>
</evidence>
<evidence type="ECO:0000269" key="5">
    <source>
    </source>
</evidence>
<evidence type="ECO:0000305" key="6"/>
<evidence type="ECO:0007744" key="7">
    <source>
    </source>
</evidence>
<evidence type="ECO:0007744" key="8">
    <source>
    </source>
</evidence>
<evidence type="ECO:0007744" key="9">
    <source>
    </source>
</evidence>
<evidence type="ECO:0007744" key="10">
    <source>
    </source>
</evidence>
<evidence type="ECO:0007744" key="11">
    <source>
    </source>
</evidence>
<evidence type="ECO:0007744" key="12">
    <source>
    </source>
</evidence>
<evidence type="ECO:0007744" key="13">
    <source>
    </source>
</evidence>
<evidence type="ECO:0007829" key="14">
    <source>
        <dbReference type="PDB" id="6IGX"/>
    </source>
</evidence>
<accession>Q9BPX3</accession>
<accession>Q3MJE0</accession>
<accession>Q96SV9</accession>
<accession>Q9BUR3</accession>
<accession>Q9BVY1</accession>
<accession>Q9H914</accession>
<accession>Q9H9Z6</accession>
<accession>Q9HBI9</accession>
<comment type="function">
    <text evidence="4">Regulatory subunit of the condensin complex, a complex required for conversion of interphase chromatin into mitotic-like condense chromosomes. The condensin complex probably introduces positive supercoils into relaxed DNA in the presence of type I topoisomerases and converts nicked DNA into positive knotted forms in the presence of type II topoisomerases.</text>
</comment>
<comment type="subunit">
    <text evidence="4">Component of the condensin complex, which contains the SMC2 and SMC4 heterodimer, and three non SMC subunits that probably regulate the complex: NCAPH/BRRN1, NCAPD2/CAPD2 and NCAPG.</text>
</comment>
<comment type="interaction">
    <interactant intactId="EBI-970214">
        <id>Q9BPX3</id>
    </interactant>
    <interactant intactId="EBI-2339564">
        <id>Q8N5I2</id>
        <label>ARRDC1</label>
    </interactant>
    <organismsDiffer>false</organismsDiffer>
    <experiments>2</experiments>
</comment>
<comment type="interaction">
    <interactant intactId="EBI-970214">
        <id>Q9BPX3</id>
    </interactant>
    <interactant intactId="EBI-1044041">
        <id>Q15021</id>
        <label>NCAPD2</label>
    </interactant>
    <organismsDiffer>false</organismsDiffer>
    <experiments>2</experiments>
</comment>
<comment type="interaction">
    <interactant intactId="EBI-970214">
        <id>Q9BPX3</id>
    </interactant>
    <interactant intactId="EBI-1046410">
        <id>Q15003</id>
        <label>NCAPH</label>
    </interactant>
    <organismsDiffer>false</organismsDiffer>
    <experiments>9</experiments>
</comment>
<comment type="subcellular location">
    <subcellularLocation>
        <location>Nucleus</location>
    </subcellularLocation>
    <subcellularLocation>
        <location>Cytoplasm</location>
    </subcellularLocation>
    <subcellularLocation>
        <location>Chromosome</location>
    </subcellularLocation>
    <text>In interphase cells, the majority of the condensin complex is found in the cytoplasm, while a minority of the complex is associated with chromatin. A subpopulation of the complex however remains associated with chromosome foci in interphase cells. During mitosis, most of the condensin complex is associated with the chromatin. At the onset of prophase, the regulatory subunits of the complex are phosphorylated by CDK1, leading to condensin's association with chromosome arms and to chromosome condensation. Dissociation from chromosomes is observed in late telophase.</text>
</comment>
<comment type="tissue specificity">
    <text evidence="3">Highly expressed in testis.</text>
</comment>
<comment type="PTM">
    <text evidence="1">Phosphorylated by CDK1. Its phosphorylation, as well as that of NCAPD2 and NCAPH subunits, activates the condensin complex and is required for chromosome condensation (By similarity).</text>
</comment>
<comment type="miscellaneous">
    <text>Overexpressed in some cancer lines and some tumor cells.</text>
</comment>
<comment type="similarity">
    <text evidence="6">Belongs to the CND3 (condensin subunit 3) family.</text>
</comment>
<comment type="sequence caution" evidence="6">
    <conflict type="erroneous initiation">
        <sequence resource="EMBL-CDS" id="AAH00827"/>
    </conflict>
    <text>Truncated N-terminus.</text>
</comment>
<comment type="sequence caution" evidence="6">
    <conflict type="erroneous initiation">
        <sequence resource="EMBL-CDS" id="BAB14429"/>
    </conflict>
    <text>Truncated N-terminus.</text>
</comment>
<comment type="sequence caution" evidence="6">
    <conflict type="erroneous initiation">
        <sequence resource="EMBL-CDS" id="BAB55165"/>
    </conflict>
    <text>Truncated N-terminus.</text>
</comment>
<protein>
    <recommendedName>
        <fullName>Condensin complex subunit 3</fullName>
    </recommendedName>
    <alternativeName>
        <fullName>Chromosome-associated protein G</fullName>
    </alternativeName>
    <alternativeName>
        <fullName>Condensin subunit CAP-G</fullName>
        <shortName>hCAP-G</shortName>
    </alternativeName>
    <alternativeName>
        <fullName>Melanoma antigen NY-MEL-3</fullName>
    </alternativeName>
    <alternativeName>
        <fullName>Non-SMC condensin I complex subunit G</fullName>
    </alternativeName>
    <alternativeName>
        <fullName>XCAP-G homolog</fullName>
    </alternativeName>
</protein>
<keyword id="KW-0002">3D-structure</keyword>
<keyword id="KW-0131">Cell cycle</keyword>
<keyword id="KW-0132">Cell division</keyword>
<keyword id="KW-0158">Chromosome</keyword>
<keyword id="KW-0963">Cytoplasm</keyword>
<keyword id="KW-0226">DNA condensation</keyword>
<keyword id="KW-0498">Mitosis</keyword>
<keyword id="KW-0539">Nucleus</keyword>
<keyword id="KW-0597">Phosphoprotein</keyword>
<keyword id="KW-1267">Proteomics identification</keyword>
<keyword id="KW-1185">Reference proteome</keyword>
<keyword id="KW-0677">Repeat</keyword>
<organism>
    <name type="scientific">Homo sapiens</name>
    <name type="common">Human</name>
    <dbReference type="NCBI Taxonomy" id="9606"/>
    <lineage>
        <taxon>Eukaryota</taxon>
        <taxon>Metazoa</taxon>
        <taxon>Chordata</taxon>
        <taxon>Craniata</taxon>
        <taxon>Vertebrata</taxon>
        <taxon>Euteleostomi</taxon>
        <taxon>Mammalia</taxon>
        <taxon>Eutheria</taxon>
        <taxon>Euarchontoglires</taxon>
        <taxon>Primates</taxon>
        <taxon>Haplorrhini</taxon>
        <taxon>Catarrhini</taxon>
        <taxon>Hominidae</taxon>
        <taxon>Homo</taxon>
    </lineage>
</organism>
<reference key="1">
    <citation type="journal article" date="2000" name="Cancer Res.">
        <title>Serological cloning of a melanocyte rab guanosine 5'-triphosphate-binding protein and a chromosome condensation protein from a melanoma complementary DNA library.</title>
        <authorList>
            <person name="Jaeger D."/>
            <person name="Stockert E."/>
            <person name="Jaeger E."/>
            <person name="Guere A.O."/>
            <person name="Scanlan M.J."/>
            <person name="Knuth A."/>
            <person name="Old L.J."/>
            <person name="Chen Y.-T."/>
        </authorList>
    </citation>
    <scope>NUCLEOTIDE SEQUENCE [MRNA]</scope>
    <scope>TISSUE SPECIFICITY</scope>
    <scope>VARIANT ILE-581</scope>
    <source>
        <tissue>Melanocyte</tissue>
    </source>
</reference>
<reference key="2">
    <citation type="journal article" date="2001" name="J. Biol. Chem.">
        <title>Chromosome condensation by a human condensin complex in Xenopus egg extracts.</title>
        <authorList>
            <person name="Kimura K."/>
            <person name="Cuvier O."/>
            <person name="Hirano T."/>
        </authorList>
    </citation>
    <scope>NUCLEOTIDE SEQUENCE [MRNA]</scope>
    <scope>IDENTIFICATION IN A CONDENSIN COMPLEX WITH SMC2; SMC4; NCAPD2 AND NCAPH</scope>
    <scope>FUNCTION OF THE COMPLEX</scope>
</reference>
<reference key="3">
    <citation type="submission" date="1998-04" db="EMBL/GenBank/DDBJ databases">
        <title>Differentiation responsive gene.</title>
        <authorList>
            <person name="Minami T."/>
            <person name="Doi T."/>
            <person name="Tachibana K."/>
            <person name="Okada Y."/>
        </authorList>
    </citation>
    <scope>NUCLEOTIDE SEQUENCE [MRNA]</scope>
    <source>
        <tissue>Erythroleukemia</tissue>
    </source>
</reference>
<reference key="4">
    <citation type="journal article" date="2004" name="Nat. Genet.">
        <title>Complete sequencing and characterization of 21,243 full-length human cDNAs.</title>
        <authorList>
            <person name="Ota T."/>
            <person name="Suzuki Y."/>
            <person name="Nishikawa T."/>
            <person name="Otsuki T."/>
            <person name="Sugiyama T."/>
            <person name="Irie R."/>
            <person name="Wakamatsu A."/>
            <person name="Hayashi K."/>
            <person name="Sato H."/>
            <person name="Nagai K."/>
            <person name="Kimura K."/>
            <person name="Makita H."/>
            <person name="Sekine M."/>
            <person name="Obayashi M."/>
            <person name="Nishi T."/>
            <person name="Shibahara T."/>
            <person name="Tanaka T."/>
            <person name="Ishii S."/>
            <person name="Yamamoto J."/>
            <person name="Saito K."/>
            <person name="Kawai Y."/>
            <person name="Isono Y."/>
            <person name="Nakamura Y."/>
            <person name="Nagahari K."/>
            <person name="Murakami K."/>
            <person name="Yasuda T."/>
            <person name="Iwayanagi T."/>
            <person name="Wagatsuma M."/>
            <person name="Shiratori A."/>
            <person name="Sudo H."/>
            <person name="Hosoiri T."/>
            <person name="Kaku Y."/>
            <person name="Kodaira H."/>
            <person name="Kondo H."/>
            <person name="Sugawara M."/>
            <person name="Takahashi M."/>
            <person name="Kanda K."/>
            <person name="Yokoi T."/>
            <person name="Furuya T."/>
            <person name="Kikkawa E."/>
            <person name="Omura Y."/>
            <person name="Abe K."/>
            <person name="Kamihara K."/>
            <person name="Katsuta N."/>
            <person name="Sato K."/>
            <person name="Tanikawa M."/>
            <person name="Yamazaki M."/>
            <person name="Ninomiya K."/>
            <person name="Ishibashi T."/>
            <person name="Yamashita H."/>
            <person name="Murakawa K."/>
            <person name="Fujimori K."/>
            <person name="Tanai H."/>
            <person name="Kimata M."/>
            <person name="Watanabe M."/>
            <person name="Hiraoka S."/>
            <person name="Chiba Y."/>
            <person name="Ishida S."/>
            <person name="Ono Y."/>
            <person name="Takiguchi S."/>
            <person name="Watanabe S."/>
            <person name="Yosida M."/>
            <person name="Hotuta T."/>
            <person name="Kusano J."/>
            <person name="Kanehori K."/>
            <person name="Takahashi-Fujii A."/>
            <person name="Hara H."/>
            <person name="Tanase T.-O."/>
            <person name="Nomura Y."/>
            <person name="Togiya S."/>
            <person name="Komai F."/>
            <person name="Hara R."/>
            <person name="Takeuchi K."/>
            <person name="Arita M."/>
            <person name="Imose N."/>
            <person name="Musashino K."/>
            <person name="Yuuki H."/>
            <person name="Oshima A."/>
            <person name="Sasaki N."/>
            <person name="Aotsuka S."/>
            <person name="Yoshikawa Y."/>
            <person name="Matsunawa H."/>
            <person name="Ichihara T."/>
            <person name="Shiohata N."/>
            <person name="Sano S."/>
            <person name="Moriya S."/>
            <person name="Momiyama H."/>
            <person name="Satoh N."/>
            <person name="Takami S."/>
            <person name="Terashima Y."/>
            <person name="Suzuki O."/>
            <person name="Nakagawa S."/>
            <person name="Senoh A."/>
            <person name="Mizoguchi H."/>
            <person name="Goto Y."/>
            <person name="Shimizu F."/>
            <person name="Wakebe H."/>
            <person name="Hishigaki H."/>
            <person name="Watanabe T."/>
            <person name="Sugiyama A."/>
            <person name="Takemoto M."/>
            <person name="Kawakami B."/>
            <person name="Yamazaki M."/>
            <person name="Watanabe K."/>
            <person name="Kumagai A."/>
            <person name="Itakura S."/>
            <person name="Fukuzumi Y."/>
            <person name="Fujimori Y."/>
            <person name="Komiyama M."/>
            <person name="Tashiro H."/>
            <person name="Tanigami A."/>
            <person name="Fujiwara T."/>
            <person name="Ono T."/>
            <person name="Yamada K."/>
            <person name="Fujii Y."/>
            <person name="Ozaki K."/>
            <person name="Hirao M."/>
            <person name="Ohmori Y."/>
            <person name="Kawabata A."/>
            <person name="Hikiji T."/>
            <person name="Kobatake N."/>
            <person name="Inagaki H."/>
            <person name="Ikema Y."/>
            <person name="Okamoto S."/>
            <person name="Okitani R."/>
            <person name="Kawakami T."/>
            <person name="Noguchi S."/>
            <person name="Itoh T."/>
            <person name="Shigeta K."/>
            <person name="Senba T."/>
            <person name="Matsumura K."/>
            <person name="Nakajima Y."/>
            <person name="Mizuno T."/>
            <person name="Morinaga M."/>
            <person name="Sasaki M."/>
            <person name="Togashi T."/>
            <person name="Oyama M."/>
            <person name="Hata H."/>
            <person name="Watanabe M."/>
            <person name="Komatsu T."/>
            <person name="Mizushima-Sugano J."/>
            <person name="Satoh T."/>
            <person name="Shirai Y."/>
            <person name="Takahashi Y."/>
            <person name="Nakagawa K."/>
            <person name="Okumura K."/>
            <person name="Nagase T."/>
            <person name="Nomura N."/>
            <person name="Kikuchi H."/>
            <person name="Masuho Y."/>
            <person name="Yamashita R."/>
            <person name="Nakai K."/>
            <person name="Yada T."/>
            <person name="Nakamura Y."/>
            <person name="Ohara O."/>
            <person name="Isogai T."/>
            <person name="Sugano S."/>
        </authorList>
    </citation>
    <scope>NUCLEOTIDE SEQUENCE [LARGE SCALE MRNA]</scope>
    <source>
        <tissue>Teratocarcinoma</tissue>
    </source>
</reference>
<reference key="5">
    <citation type="journal article" date="2004" name="Genome Res.">
        <title>The status, quality, and expansion of the NIH full-length cDNA project: the Mammalian Gene Collection (MGC).</title>
        <authorList>
            <consortium name="The MGC Project Team"/>
        </authorList>
    </citation>
    <scope>NUCLEOTIDE SEQUENCE [LARGE SCALE MRNA]</scope>
    <source>
        <tissue>Placenta</tissue>
    </source>
</reference>
<reference key="6">
    <citation type="journal article" date="2006" name="Cell">
        <title>Global, in vivo, and site-specific phosphorylation dynamics in signaling networks.</title>
        <authorList>
            <person name="Olsen J.V."/>
            <person name="Blagoev B."/>
            <person name="Gnad F."/>
            <person name="Macek B."/>
            <person name="Kumar C."/>
            <person name="Mortensen P."/>
            <person name="Mann M."/>
        </authorList>
    </citation>
    <scope>PHOSPHORYLATION [LARGE SCALE ANALYSIS] AT SER-674 AND SER-1015</scope>
    <scope>IDENTIFICATION BY MASS SPECTROMETRY [LARGE SCALE ANALYSIS]</scope>
    <source>
        <tissue>Cervix carcinoma</tissue>
    </source>
</reference>
<reference key="7">
    <citation type="journal article" date="2008" name="J. Proteome Res.">
        <title>Phosphoproteome of resting human platelets.</title>
        <authorList>
            <person name="Zahedi R.P."/>
            <person name="Lewandrowski U."/>
            <person name="Wiesner J."/>
            <person name="Wortelkamp S."/>
            <person name="Moebius J."/>
            <person name="Schuetz C."/>
            <person name="Walter U."/>
            <person name="Gambaryan S."/>
            <person name="Sickmann A."/>
        </authorList>
    </citation>
    <scope>IDENTIFICATION BY MASS SPECTROMETRY [LARGE SCALE ANALYSIS]</scope>
    <source>
        <tissue>Platelet</tissue>
    </source>
</reference>
<reference key="8">
    <citation type="journal article" date="2008" name="Mol. Cell">
        <title>Kinase-selective enrichment enables quantitative phosphoproteomics of the kinome across the cell cycle.</title>
        <authorList>
            <person name="Daub H."/>
            <person name="Olsen J.V."/>
            <person name="Bairlein M."/>
            <person name="Gnad F."/>
            <person name="Oppermann F.S."/>
            <person name="Korner R."/>
            <person name="Greff Z."/>
            <person name="Keri G."/>
            <person name="Stemmann O."/>
            <person name="Mann M."/>
        </authorList>
    </citation>
    <scope>PHOSPHORYLATION [LARGE SCALE ANALYSIS] AT SER-674 AND SER-1015</scope>
    <scope>IDENTIFICATION BY MASS SPECTROMETRY [LARGE SCALE ANALYSIS]</scope>
    <source>
        <tissue>Cervix carcinoma</tissue>
    </source>
</reference>
<reference key="9">
    <citation type="journal article" date="2008" name="Proc. Natl. Acad. Sci. U.S.A.">
        <title>A quantitative atlas of mitotic phosphorylation.</title>
        <authorList>
            <person name="Dephoure N."/>
            <person name="Zhou C."/>
            <person name="Villen J."/>
            <person name="Beausoleil S.A."/>
            <person name="Bakalarski C.E."/>
            <person name="Elledge S.J."/>
            <person name="Gygi S.P."/>
        </authorList>
    </citation>
    <scope>PHOSPHORYLATION [LARGE SCALE ANALYSIS] AT SER-674; SER-973; SER-975 AND SER-1002</scope>
    <scope>IDENTIFICATION BY MASS SPECTROMETRY [LARGE SCALE ANALYSIS]</scope>
    <source>
        <tissue>Cervix carcinoma</tissue>
    </source>
</reference>
<reference key="10">
    <citation type="journal article" date="2009" name="Anal. Chem.">
        <title>Lys-N and trypsin cover complementary parts of the phosphoproteome in a refined SCX-based approach.</title>
        <authorList>
            <person name="Gauci S."/>
            <person name="Helbig A.O."/>
            <person name="Slijper M."/>
            <person name="Krijgsveld J."/>
            <person name="Heck A.J."/>
            <person name="Mohammed S."/>
        </authorList>
    </citation>
    <scope>IDENTIFICATION BY MASS SPECTROMETRY [LARGE SCALE ANALYSIS]</scope>
</reference>
<reference key="11">
    <citation type="journal article" date="2009" name="Sci. Signal.">
        <title>Quantitative phosphoproteomic analysis of T cell receptor signaling reveals system-wide modulation of protein-protein interactions.</title>
        <authorList>
            <person name="Mayya V."/>
            <person name="Lundgren D.H."/>
            <person name="Hwang S.-I."/>
            <person name="Rezaul K."/>
            <person name="Wu L."/>
            <person name="Eng J.K."/>
            <person name="Rodionov V."/>
            <person name="Han D.K."/>
        </authorList>
    </citation>
    <scope>PHOSPHORYLATION [LARGE SCALE ANALYSIS] AT SER-390; SER-674 AND SER-1015</scope>
    <scope>IDENTIFICATION BY MASS SPECTROMETRY [LARGE SCALE ANALYSIS]</scope>
    <source>
        <tissue>Leukemic T-cell</tissue>
    </source>
</reference>
<reference key="12">
    <citation type="journal article" date="2010" name="Sci. Signal.">
        <title>Quantitative phosphoproteomics reveals widespread full phosphorylation site occupancy during mitosis.</title>
        <authorList>
            <person name="Olsen J.V."/>
            <person name="Vermeulen M."/>
            <person name="Santamaria A."/>
            <person name="Kumar C."/>
            <person name="Miller M.L."/>
            <person name="Jensen L.J."/>
            <person name="Gnad F."/>
            <person name="Cox J."/>
            <person name="Jensen T.S."/>
            <person name="Nigg E.A."/>
            <person name="Brunak S."/>
            <person name="Mann M."/>
        </authorList>
    </citation>
    <scope>PHOSPHORYLATION [LARGE SCALE ANALYSIS] AT SER-390; SER-674; THR-931 AND SER-1015</scope>
    <scope>IDENTIFICATION BY MASS SPECTROMETRY [LARGE SCALE ANALYSIS]</scope>
    <source>
        <tissue>Cervix carcinoma</tissue>
    </source>
</reference>
<reference key="13">
    <citation type="journal article" date="2011" name="BMC Syst. Biol.">
        <title>Initial characterization of the human central proteome.</title>
        <authorList>
            <person name="Burkard T.R."/>
            <person name="Planyavsky M."/>
            <person name="Kaupe I."/>
            <person name="Breitwieser F.P."/>
            <person name="Buerckstuemmer T."/>
            <person name="Bennett K.L."/>
            <person name="Superti-Furga G."/>
            <person name="Colinge J."/>
        </authorList>
    </citation>
    <scope>IDENTIFICATION BY MASS SPECTROMETRY [LARGE SCALE ANALYSIS]</scope>
</reference>
<reference key="14">
    <citation type="journal article" date="2011" name="Sci. Signal.">
        <title>System-wide temporal characterization of the proteome and phosphoproteome of human embryonic stem cell differentiation.</title>
        <authorList>
            <person name="Rigbolt K.T."/>
            <person name="Prokhorova T.A."/>
            <person name="Akimov V."/>
            <person name="Henningsen J."/>
            <person name="Johansen P.T."/>
            <person name="Kratchmarova I."/>
            <person name="Kassem M."/>
            <person name="Mann M."/>
            <person name="Olsen J.V."/>
            <person name="Blagoev B."/>
        </authorList>
    </citation>
    <scope>PHOSPHORYLATION [LARGE SCALE ANALYSIS] AT SER-674 AND SER-1015</scope>
    <scope>IDENTIFICATION BY MASS SPECTROMETRY [LARGE SCALE ANALYSIS]</scope>
</reference>
<reference key="15">
    <citation type="journal article" date="2013" name="J. Proteome Res.">
        <title>Toward a comprehensive characterization of a human cancer cell phosphoproteome.</title>
        <authorList>
            <person name="Zhou H."/>
            <person name="Di Palma S."/>
            <person name="Preisinger C."/>
            <person name="Peng M."/>
            <person name="Polat A.N."/>
            <person name="Heck A.J."/>
            <person name="Mohammed S."/>
        </authorList>
    </citation>
    <scope>PHOSPHORYLATION [LARGE SCALE ANALYSIS] AT SER-390; SER-674 AND THR-931</scope>
    <scope>IDENTIFICATION BY MASS SPECTROMETRY [LARGE SCALE ANALYSIS]</scope>
    <source>
        <tissue>Cervix carcinoma</tissue>
        <tissue>Erythroleukemia</tissue>
    </source>
</reference>
<reference key="16">
    <citation type="journal article" date="2015" name="Proteomics">
        <title>N-terminome analysis of the human mitochondrial proteome.</title>
        <authorList>
            <person name="Vaca Jacome A.S."/>
            <person name="Rabilloud T."/>
            <person name="Schaeffer-Reiss C."/>
            <person name="Rompais M."/>
            <person name="Ayoub D."/>
            <person name="Lane L."/>
            <person name="Bairoch A."/>
            <person name="Van Dorsselaer A."/>
            <person name="Carapito C."/>
        </authorList>
    </citation>
    <scope>IDENTIFICATION BY MASS SPECTROMETRY [LARGE SCALE ANALYSIS]</scope>
</reference>
<reference key="17">
    <citation type="journal article" date="2006" name="Science">
        <title>The consensus coding sequences of human breast and colorectal cancers.</title>
        <authorList>
            <person name="Sjoeblom T."/>
            <person name="Jones S."/>
            <person name="Wood L.D."/>
            <person name="Parsons D.W."/>
            <person name="Lin J."/>
            <person name="Barber T.D."/>
            <person name="Mandelker D."/>
            <person name="Leary R.J."/>
            <person name="Ptak J."/>
            <person name="Silliman N."/>
            <person name="Szabo S."/>
            <person name="Buckhaults P."/>
            <person name="Farrell C."/>
            <person name="Meeh P."/>
            <person name="Markowitz S.D."/>
            <person name="Willis J."/>
            <person name="Dawson D."/>
            <person name="Willson J.K.V."/>
            <person name="Gazdar A.F."/>
            <person name="Hartigan J."/>
            <person name="Wu L."/>
            <person name="Liu C."/>
            <person name="Parmigiani G."/>
            <person name="Park B.H."/>
            <person name="Bachman K.E."/>
            <person name="Papadopoulos N."/>
            <person name="Vogelstein B."/>
            <person name="Kinzler K.W."/>
            <person name="Velculescu V.E."/>
        </authorList>
    </citation>
    <scope>VARIANT [LARGE SCALE ANALYSIS] THR-265</scope>
</reference>